<feature type="chain" id="PRO_0000090932" description="Elongation factor 1-alpha 1">
    <location>
        <begin position="1"/>
        <end position="449"/>
    </location>
</feature>
<feature type="domain" description="tr-type G">
    <location>
        <begin position="5"/>
        <end position="230"/>
    </location>
</feature>
<feature type="region of interest" description="G1" evidence="1">
    <location>
        <begin position="14"/>
        <end position="21"/>
    </location>
</feature>
<feature type="region of interest" description="G2" evidence="1">
    <location>
        <begin position="70"/>
        <end position="74"/>
    </location>
</feature>
<feature type="region of interest" description="G3" evidence="1">
    <location>
        <begin position="91"/>
        <end position="94"/>
    </location>
</feature>
<feature type="region of interest" description="G4" evidence="1">
    <location>
        <begin position="153"/>
        <end position="156"/>
    </location>
</feature>
<feature type="region of interest" description="G5" evidence="1">
    <location>
        <begin position="194"/>
        <end position="196"/>
    </location>
</feature>
<feature type="binding site" evidence="1">
    <location>
        <begin position="14"/>
        <end position="21"/>
    </location>
    <ligand>
        <name>GTP</name>
        <dbReference type="ChEBI" id="CHEBI:37565"/>
    </ligand>
</feature>
<feature type="binding site" evidence="1">
    <location>
        <begin position="91"/>
        <end position="95"/>
    </location>
    <ligand>
        <name>GTP</name>
        <dbReference type="ChEBI" id="CHEBI:37565"/>
    </ligand>
</feature>
<feature type="binding site" evidence="1">
    <location>
        <begin position="153"/>
        <end position="156"/>
    </location>
    <ligand>
        <name>GTP</name>
        <dbReference type="ChEBI" id="CHEBI:37565"/>
    </ligand>
</feature>
<feature type="modified residue" description="N6,N6-dimethyllysine" evidence="2">
    <location>
        <position position="55"/>
    </location>
</feature>
<feature type="modified residue" description="N6,N6,N6-trimethyllysine" evidence="2">
    <location>
        <position position="79"/>
    </location>
</feature>
<feature type="modified residue" description="N6,N6,N6-trimethyllysine" evidence="2">
    <location>
        <position position="187"/>
    </location>
</feature>
<feature type="modified residue" description="N6-methyllysine" evidence="2">
    <location>
        <position position="261"/>
    </location>
</feature>
<feature type="modified residue" description="N6,N6,N6-trimethyllysine" evidence="2">
    <location>
        <position position="306"/>
    </location>
</feature>
<feature type="modified residue" description="N6,N6,N6-trimethyllysine" evidence="2">
    <location>
        <position position="396"/>
    </location>
</feature>
<feature type="cross-link" description="Glycyl lysine isopeptide (Lys-Gly) (interchain with G-Cter in ubiquitin)" evidence="3">
    <location>
        <position position="438"/>
    </location>
</feature>
<feature type="cross-link" description="Glycyl lysine isopeptide (Lys-Gly) (interchain with G-Cter in ubiquitin)" evidence="3">
    <location>
        <position position="441"/>
    </location>
</feature>
<reference key="1">
    <citation type="journal article" date="1989" name="Mol. Gen. Genet.">
        <title>The gene family encoding the Arabidopsis thaliana translation elongation factor EF-1 alpha: molecular cloning, characterization and expression.</title>
        <authorList>
            <person name="Axelos M."/>
            <person name="Bardet C."/>
            <person name="Liboz T."/>
            <person name="Le van Thai A."/>
            <person name="Curie C."/>
            <person name="Lescure B."/>
        </authorList>
    </citation>
    <scope>NUCLEOTIDE SEQUENCE [GENOMIC DNA]</scope>
    <source>
        <strain>cv. Columbia</strain>
    </source>
</reference>
<reference key="2">
    <citation type="submission" date="1996-07" db="EMBL/GenBank/DDBJ databases">
        <authorList>
            <person name="Tremousaygue D."/>
            <person name="Bardet C."/>
            <person name="Dabos P."/>
            <person name="Regad F."/>
            <person name="Pelese F."/>
            <person name="Lescure B."/>
        </authorList>
    </citation>
    <scope>NUCLEOTIDE SEQUENCE [GENOMIC DNA]</scope>
    <source>
        <strain>cv. Columbia</strain>
    </source>
</reference>
<reference key="3">
    <citation type="journal article" date="2000" name="Nature">
        <title>Sequence and analysis of chromosome 1 of the plant Arabidopsis thaliana.</title>
        <authorList>
            <person name="Theologis A."/>
            <person name="Ecker J.R."/>
            <person name="Palm C.J."/>
            <person name="Federspiel N.A."/>
            <person name="Kaul S."/>
            <person name="White O."/>
            <person name="Alonso J."/>
            <person name="Altafi H."/>
            <person name="Araujo R."/>
            <person name="Bowman C.L."/>
            <person name="Brooks S.Y."/>
            <person name="Buehler E."/>
            <person name="Chan A."/>
            <person name="Chao Q."/>
            <person name="Chen H."/>
            <person name="Cheuk R.F."/>
            <person name="Chin C.W."/>
            <person name="Chung M.K."/>
            <person name="Conn L."/>
            <person name="Conway A.B."/>
            <person name="Conway A.R."/>
            <person name="Creasy T.H."/>
            <person name="Dewar K."/>
            <person name="Dunn P."/>
            <person name="Etgu P."/>
            <person name="Feldblyum T.V."/>
            <person name="Feng J.-D."/>
            <person name="Fong B."/>
            <person name="Fujii C.Y."/>
            <person name="Gill J.E."/>
            <person name="Goldsmith A.D."/>
            <person name="Haas B."/>
            <person name="Hansen N.F."/>
            <person name="Hughes B."/>
            <person name="Huizar L."/>
            <person name="Hunter J.L."/>
            <person name="Jenkins J."/>
            <person name="Johnson-Hopson C."/>
            <person name="Khan S."/>
            <person name="Khaykin E."/>
            <person name="Kim C.J."/>
            <person name="Koo H.L."/>
            <person name="Kremenetskaia I."/>
            <person name="Kurtz D.B."/>
            <person name="Kwan A."/>
            <person name="Lam B."/>
            <person name="Langin-Hooper S."/>
            <person name="Lee A."/>
            <person name="Lee J.M."/>
            <person name="Lenz C.A."/>
            <person name="Li J.H."/>
            <person name="Li Y.-P."/>
            <person name="Lin X."/>
            <person name="Liu S.X."/>
            <person name="Liu Z.A."/>
            <person name="Luros J.S."/>
            <person name="Maiti R."/>
            <person name="Marziali A."/>
            <person name="Militscher J."/>
            <person name="Miranda M."/>
            <person name="Nguyen M."/>
            <person name="Nierman W.C."/>
            <person name="Osborne B.I."/>
            <person name="Pai G."/>
            <person name="Peterson J."/>
            <person name="Pham P.K."/>
            <person name="Rizzo M."/>
            <person name="Rooney T."/>
            <person name="Rowley D."/>
            <person name="Sakano H."/>
            <person name="Salzberg S.L."/>
            <person name="Schwartz J.R."/>
            <person name="Shinn P."/>
            <person name="Southwick A.M."/>
            <person name="Sun H."/>
            <person name="Tallon L.J."/>
            <person name="Tambunga G."/>
            <person name="Toriumi M.J."/>
            <person name="Town C.D."/>
            <person name="Utterback T."/>
            <person name="Van Aken S."/>
            <person name="Vaysberg M."/>
            <person name="Vysotskaia V.S."/>
            <person name="Walker M."/>
            <person name="Wu D."/>
            <person name="Yu G."/>
            <person name="Fraser C.M."/>
            <person name="Venter J.C."/>
            <person name="Davis R.W."/>
        </authorList>
    </citation>
    <scope>NUCLEOTIDE SEQUENCE [LARGE SCALE GENOMIC DNA]</scope>
    <source>
        <strain>cv. Columbia</strain>
    </source>
</reference>
<reference key="4">
    <citation type="journal article" date="2017" name="Plant J.">
        <title>Araport11: a complete reannotation of the Arabidopsis thaliana reference genome.</title>
        <authorList>
            <person name="Cheng C.Y."/>
            <person name="Krishnakumar V."/>
            <person name="Chan A.P."/>
            <person name="Thibaud-Nissen F."/>
            <person name="Schobel S."/>
            <person name="Town C.D."/>
        </authorList>
    </citation>
    <scope>GENOME REANNOTATION</scope>
    <source>
        <strain>cv. Columbia</strain>
    </source>
</reference>
<reference key="5">
    <citation type="journal article" date="2003" name="Science">
        <title>Empirical analysis of transcriptional activity in the Arabidopsis genome.</title>
        <authorList>
            <person name="Yamada K."/>
            <person name="Lim J."/>
            <person name="Dale J.M."/>
            <person name="Chen H."/>
            <person name="Shinn P."/>
            <person name="Palm C.J."/>
            <person name="Southwick A.M."/>
            <person name="Wu H.C."/>
            <person name="Kim C.J."/>
            <person name="Nguyen M."/>
            <person name="Pham P.K."/>
            <person name="Cheuk R.F."/>
            <person name="Karlin-Newmann G."/>
            <person name="Liu S.X."/>
            <person name="Lam B."/>
            <person name="Sakano H."/>
            <person name="Wu T."/>
            <person name="Yu G."/>
            <person name="Miranda M."/>
            <person name="Quach H.L."/>
            <person name="Tripp M."/>
            <person name="Chang C.H."/>
            <person name="Lee J.M."/>
            <person name="Toriumi M.J."/>
            <person name="Chan M.M."/>
            <person name="Tang C.C."/>
            <person name="Onodera C.S."/>
            <person name="Deng J.M."/>
            <person name="Akiyama K."/>
            <person name="Ansari Y."/>
            <person name="Arakawa T."/>
            <person name="Banh J."/>
            <person name="Banno F."/>
            <person name="Bowser L."/>
            <person name="Brooks S.Y."/>
            <person name="Carninci P."/>
            <person name="Chao Q."/>
            <person name="Choy N."/>
            <person name="Enju A."/>
            <person name="Goldsmith A.D."/>
            <person name="Gurjal M."/>
            <person name="Hansen N.F."/>
            <person name="Hayashizaki Y."/>
            <person name="Johnson-Hopson C."/>
            <person name="Hsuan V.W."/>
            <person name="Iida K."/>
            <person name="Karnes M."/>
            <person name="Khan S."/>
            <person name="Koesema E."/>
            <person name="Ishida J."/>
            <person name="Jiang P.X."/>
            <person name="Jones T."/>
            <person name="Kawai J."/>
            <person name="Kamiya A."/>
            <person name="Meyers C."/>
            <person name="Nakajima M."/>
            <person name="Narusaka M."/>
            <person name="Seki M."/>
            <person name="Sakurai T."/>
            <person name="Satou M."/>
            <person name="Tamse R."/>
            <person name="Vaysberg M."/>
            <person name="Wallender E.K."/>
            <person name="Wong C."/>
            <person name="Yamamura Y."/>
            <person name="Yuan S."/>
            <person name="Shinozaki K."/>
            <person name="Davis R.W."/>
            <person name="Theologis A."/>
            <person name="Ecker J.R."/>
        </authorList>
    </citation>
    <scope>NUCLEOTIDE SEQUENCE [LARGE SCALE MRNA]</scope>
    <source>
        <strain>cv. Columbia</strain>
    </source>
</reference>
<reference key="6">
    <citation type="journal article" date="2007" name="Mol. Cell. Proteomics">
        <title>Multidimensional protein identification technology (MudPIT) analysis of ubiquitinated proteins in plants.</title>
        <authorList>
            <person name="Maor R."/>
            <person name="Jones A."/>
            <person name="Nuehse T.S."/>
            <person name="Studholme D.J."/>
            <person name="Peck S.C."/>
            <person name="Shirasu K."/>
        </authorList>
    </citation>
    <scope>IDENTIFICATION BY MASS SPECTROMETRY [LARGE SCALE ANALYSIS]</scope>
    <source>
        <strain>cv. Landsberg erecta</strain>
    </source>
</reference>
<reference key="7">
    <citation type="journal article" date="2009" name="J. Proteomics">
        <title>Phosphoproteomic analysis of nuclei-enriched fractions from Arabidopsis thaliana.</title>
        <authorList>
            <person name="Jones A.M.E."/>
            <person name="MacLean D."/>
            <person name="Studholme D.J."/>
            <person name="Serna-Sanz A."/>
            <person name="Andreasson E."/>
            <person name="Rathjen J.P."/>
            <person name="Peck S.C."/>
        </authorList>
    </citation>
    <scope>IDENTIFICATION BY MASS SPECTROMETRY [LARGE SCALE ANALYSIS]</scope>
    <source>
        <strain>cv. Columbia</strain>
    </source>
</reference>
<reference key="8">
    <citation type="journal article" date="2009" name="Plant J.">
        <title>Tandem affinity purification and mass spectrometric analysis of ubiquitylated proteins in Arabidopsis.</title>
        <authorList>
            <person name="Saracco S.A."/>
            <person name="Hansson M."/>
            <person name="Scalf M."/>
            <person name="Walker J.M."/>
            <person name="Smith L.M."/>
            <person name="Vierstra R.D."/>
        </authorList>
    </citation>
    <scope>UBIQUITINATION [LARGE SCALE ANALYSIS] AT LYS-438 AND LYS-441</scope>
    <scope>IDENTIFICATION BY MASS SPECTROMETRY</scope>
</reference>
<organism>
    <name type="scientific">Arabidopsis thaliana</name>
    <name type="common">Mouse-ear cress</name>
    <dbReference type="NCBI Taxonomy" id="3702"/>
    <lineage>
        <taxon>Eukaryota</taxon>
        <taxon>Viridiplantae</taxon>
        <taxon>Streptophyta</taxon>
        <taxon>Embryophyta</taxon>
        <taxon>Tracheophyta</taxon>
        <taxon>Spermatophyta</taxon>
        <taxon>Magnoliopsida</taxon>
        <taxon>eudicotyledons</taxon>
        <taxon>Gunneridae</taxon>
        <taxon>Pentapetalae</taxon>
        <taxon>rosids</taxon>
        <taxon>malvids</taxon>
        <taxon>Brassicales</taxon>
        <taxon>Brassicaceae</taxon>
        <taxon>Camelineae</taxon>
        <taxon>Arabidopsis</taxon>
    </lineage>
</organism>
<gene>
    <name type="primary">A1</name>
    <name type="ordered locus">At1g07940</name>
    <name type="ORF">T6D22.3</name>
</gene>
<proteinExistence type="evidence at protein level"/>
<sequence length="449" mass="49502">MGKEKFHINIVVIGHVDSGKSTTTGHLIYKLGGIDKRVIERFEKEAAEMNKRSFKYAWVLDKLKAERERGITIDIALWKFETTKYYCTVIDAPGHRDFIKNMITGTSQADCAVLIIDSTTGGFEAGISKDGQTREHALLAFTLGVKQMICCCNKMDATTPKYSKARYDEIIKEVSSYLKKVGYNPDKIPFVPISGFEGDNMIERSTNLDWYKGPTLLEALDQINEPKRPSDKPLRLPLQDVYKIGGIGTVPVGRVETGMIKPGMVVTFAPTGLTTEVKSVEMHHESLLEALPGDNVGFNVKNVAVKDLKRGYVASNSKDDPAKGAANFTSQVIIMNHPGQIGNGYAPVLDCHTSHIAVKFSEILTKIDRRSGKEIEKEPKFLKNGDAGMVKMTPTKPMVVETFSEYPPLGRFAVRDMRQTVAVGVIKSVDKKDPTGAKVTKAAVKKGAK</sequence>
<dbReference type="EMBL" id="X16430">
    <property type="protein sequence ID" value="CAA34453.1"/>
    <property type="molecule type" value="Genomic_DNA"/>
</dbReference>
<dbReference type="EMBL" id="U63815">
    <property type="protein sequence ID" value="AAB07882.1"/>
    <property type="molecule type" value="Genomic_DNA"/>
</dbReference>
<dbReference type="EMBL" id="AC026875">
    <property type="protein sequence ID" value="AAF79847.1"/>
    <property type="molecule type" value="Genomic_DNA"/>
</dbReference>
<dbReference type="EMBL" id="CP002684">
    <property type="protein sequence ID" value="AEE28215.1"/>
    <property type="molecule type" value="Genomic_DNA"/>
</dbReference>
<dbReference type="EMBL" id="CP002684">
    <property type="protein sequence ID" value="AEE28216.1"/>
    <property type="molecule type" value="Genomic_DNA"/>
</dbReference>
<dbReference type="EMBL" id="CP002684">
    <property type="protein sequence ID" value="ANM58322.1"/>
    <property type="molecule type" value="Genomic_DNA"/>
</dbReference>
<dbReference type="EMBL" id="CP002684">
    <property type="protein sequence ID" value="ANM58323.1"/>
    <property type="molecule type" value="Genomic_DNA"/>
</dbReference>
<dbReference type="EMBL" id="AY039583">
    <property type="protein sequence ID" value="AAK62638.1"/>
    <property type="molecule type" value="mRNA"/>
</dbReference>
<dbReference type="EMBL" id="BT000595">
    <property type="protein sequence ID" value="AAN18164.1"/>
    <property type="molecule type" value="mRNA"/>
</dbReference>
<dbReference type="PIR" id="S06724">
    <property type="entry name" value="S06724"/>
</dbReference>
<dbReference type="RefSeq" id="NP_001030993.1">
    <property type="nucleotide sequence ID" value="NM_001035916.3"/>
</dbReference>
<dbReference type="RefSeq" id="NP_001119464.1">
    <property type="nucleotide sequence ID" value="NM_001125992.1"/>
</dbReference>
<dbReference type="RefSeq" id="NP_001318848.1">
    <property type="nucleotide sequence ID" value="NM_001345413.1"/>
</dbReference>
<dbReference type="RefSeq" id="NP_001320767.1">
    <property type="nucleotide sequence ID" value="NM_001331743.1"/>
</dbReference>
<dbReference type="RefSeq" id="NP_001320768.1">
    <property type="nucleotide sequence ID" value="NM_001331742.1"/>
</dbReference>
<dbReference type="RefSeq" id="NP_200847.1">
    <property type="nucleotide sequence ID" value="NM_125432.4"/>
</dbReference>
<dbReference type="RefSeq" id="NP_563799.1">
    <property type="nucleotide sequence ID" value="NM_100666.4"/>
</dbReference>
<dbReference type="RefSeq" id="NP_563800.1">
    <property type="nucleotide sequence ID" value="NM_100667.4"/>
</dbReference>
<dbReference type="RefSeq" id="NP_563801.1">
    <property type="nucleotide sequence ID" value="NM_100668.3"/>
</dbReference>
<dbReference type="SMR" id="P0DH99"/>
<dbReference type="BioGRID" id="21405">
    <property type="interactions" value="3"/>
</dbReference>
<dbReference type="BioGRID" id="22548">
    <property type="interactions" value="10"/>
</dbReference>
<dbReference type="BioGRID" id="22549">
    <property type="interactions" value="3"/>
</dbReference>
<dbReference type="BioGRID" id="22550">
    <property type="interactions" value="2"/>
</dbReference>
<dbReference type="FunCoup" id="P0DH99">
    <property type="interactions" value="2055"/>
</dbReference>
<dbReference type="STRING" id="3702.P0DH99"/>
<dbReference type="iPTMnet" id="P0DH99"/>
<dbReference type="MetOSite" id="P0DH99"/>
<dbReference type="PaxDb" id="3702-AT1G07920.1"/>
<dbReference type="EnsemblPlants" id="AT1G07920.1">
    <property type="protein sequence ID" value="AT1G07920.1"/>
    <property type="gene ID" value="AT1G07920"/>
</dbReference>
<dbReference type="EnsemblPlants" id="AT1G07930.1">
    <property type="protein sequence ID" value="AT1G07930.1"/>
    <property type="gene ID" value="AT1G07930"/>
</dbReference>
<dbReference type="EnsemblPlants" id="AT1G07940.1">
    <property type="protein sequence ID" value="AT1G07940.1"/>
    <property type="gene ID" value="AT1G07940"/>
</dbReference>
<dbReference type="EnsemblPlants" id="AT1G07940.2">
    <property type="protein sequence ID" value="AT1G07940.2"/>
    <property type="gene ID" value="AT1G07940"/>
</dbReference>
<dbReference type="EnsemblPlants" id="AT1G07940.3">
    <property type="protein sequence ID" value="AT1G07940.3"/>
    <property type="gene ID" value="AT1G07940"/>
</dbReference>
<dbReference type="EnsemblPlants" id="AT1G07940.4">
    <property type="protein sequence ID" value="AT1G07940.4"/>
    <property type="gene ID" value="AT1G07940"/>
</dbReference>
<dbReference type="EnsemblPlants" id="AT5G60390.1">
    <property type="protein sequence ID" value="AT5G60390.1"/>
    <property type="gene ID" value="AT5G60390"/>
</dbReference>
<dbReference type="EnsemblPlants" id="AT5G60390.2">
    <property type="protein sequence ID" value="AT5G60390.2"/>
    <property type="gene ID" value="AT5G60390"/>
</dbReference>
<dbReference type="EnsemblPlants" id="AT5G60390.3">
    <property type="protein sequence ID" value="AT5G60390.3"/>
    <property type="gene ID" value="AT5G60390"/>
</dbReference>
<dbReference type="GeneID" id="837309"/>
<dbReference type="Gramene" id="AT1G07920.1">
    <property type="protein sequence ID" value="AT1G07920.1"/>
    <property type="gene ID" value="AT1G07920"/>
</dbReference>
<dbReference type="Gramene" id="AT1G07930.1">
    <property type="protein sequence ID" value="AT1G07930.1"/>
    <property type="gene ID" value="AT1G07930"/>
</dbReference>
<dbReference type="Gramene" id="AT1G07940.1">
    <property type="protein sequence ID" value="AT1G07940.1"/>
    <property type="gene ID" value="AT1G07940"/>
</dbReference>
<dbReference type="Gramene" id="AT1G07940.2">
    <property type="protein sequence ID" value="AT1G07940.2"/>
    <property type="gene ID" value="AT1G07940"/>
</dbReference>
<dbReference type="Gramene" id="AT1G07940.3">
    <property type="protein sequence ID" value="AT1G07940.3"/>
    <property type="gene ID" value="AT1G07940"/>
</dbReference>
<dbReference type="Gramene" id="AT1G07940.4">
    <property type="protein sequence ID" value="AT1G07940.4"/>
    <property type="gene ID" value="AT1G07940"/>
</dbReference>
<dbReference type="Gramene" id="AT5G60390.1">
    <property type="protein sequence ID" value="AT5G60390.1"/>
    <property type="gene ID" value="AT5G60390"/>
</dbReference>
<dbReference type="Gramene" id="AT5G60390.2">
    <property type="protein sequence ID" value="AT5G60390.2"/>
    <property type="gene ID" value="AT5G60390"/>
</dbReference>
<dbReference type="Gramene" id="AT5G60390.3">
    <property type="protein sequence ID" value="AT5G60390.3"/>
    <property type="gene ID" value="AT5G60390"/>
</dbReference>
<dbReference type="KEGG" id="ath:AT1G07920"/>
<dbReference type="KEGG" id="ath:AT1G07930"/>
<dbReference type="KEGG" id="ath:AT1G07940"/>
<dbReference type="KEGG" id="ath:AT5G60390"/>
<dbReference type="Araport" id="AT1G07940"/>
<dbReference type="TAIR" id="AT1G07940"/>
<dbReference type="eggNOG" id="KOG0052">
    <property type="taxonomic scope" value="Eukaryota"/>
</dbReference>
<dbReference type="HOGENOM" id="CLU_007265_3_5_1"/>
<dbReference type="InParanoid" id="P0DH99"/>
<dbReference type="OMA" id="KLCLHFE"/>
<dbReference type="OrthoDB" id="1040549at2759"/>
<dbReference type="PhylomeDB" id="P0DH99"/>
<dbReference type="BRENDA" id="3.6.5.3">
    <property type="organism ID" value="399"/>
</dbReference>
<dbReference type="PRO" id="PR:P0DH99"/>
<dbReference type="Proteomes" id="UP000006548">
    <property type="component" value="Chromosome 1"/>
</dbReference>
<dbReference type="ExpressionAtlas" id="P0DH99">
    <property type="expression patterns" value="baseline and differential"/>
</dbReference>
<dbReference type="GO" id="GO:0005739">
    <property type="term" value="C:mitochondrion"/>
    <property type="evidence" value="ECO:0007005"/>
    <property type="project" value="TAIR"/>
</dbReference>
<dbReference type="GO" id="GO:0005886">
    <property type="term" value="C:plasma membrane"/>
    <property type="evidence" value="ECO:0007005"/>
    <property type="project" value="TAIR"/>
</dbReference>
<dbReference type="GO" id="GO:0009506">
    <property type="term" value="C:plasmodesma"/>
    <property type="evidence" value="ECO:0007005"/>
    <property type="project" value="TAIR"/>
</dbReference>
<dbReference type="GO" id="GO:0005525">
    <property type="term" value="F:GTP binding"/>
    <property type="evidence" value="ECO:0007669"/>
    <property type="project" value="UniProtKB-KW"/>
</dbReference>
<dbReference type="GO" id="GO:0003924">
    <property type="term" value="F:GTPase activity"/>
    <property type="evidence" value="ECO:0007669"/>
    <property type="project" value="InterPro"/>
</dbReference>
<dbReference type="GO" id="GO:0003729">
    <property type="term" value="F:mRNA binding"/>
    <property type="evidence" value="ECO:0000314"/>
    <property type="project" value="TAIR"/>
</dbReference>
<dbReference type="GO" id="GO:0003746">
    <property type="term" value="F:translation elongation factor activity"/>
    <property type="evidence" value="ECO:0007669"/>
    <property type="project" value="UniProtKB-KW"/>
</dbReference>
<dbReference type="CDD" id="cd01883">
    <property type="entry name" value="EF1_alpha"/>
    <property type="match status" value="1"/>
</dbReference>
<dbReference type="CDD" id="cd03693">
    <property type="entry name" value="EF1_alpha_II"/>
    <property type="match status" value="1"/>
</dbReference>
<dbReference type="CDD" id="cd03705">
    <property type="entry name" value="EF1_alpha_III"/>
    <property type="match status" value="1"/>
</dbReference>
<dbReference type="FunFam" id="2.40.30.10:FF:000003">
    <property type="entry name" value="Elongation factor 1-alpha"/>
    <property type="match status" value="1"/>
</dbReference>
<dbReference type="FunFam" id="2.40.30.10:FF:000005">
    <property type="entry name" value="Elongation factor 1-alpha"/>
    <property type="match status" value="1"/>
</dbReference>
<dbReference type="FunFam" id="3.40.50.300:FF:000255">
    <property type="entry name" value="Elongation factor 1-alpha"/>
    <property type="match status" value="1"/>
</dbReference>
<dbReference type="Gene3D" id="3.40.50.300">
    <property type="entry name" value="P-loop containing nucleotide triphosphate hydrolases"/>
    <property type="match status" value="1"/>
</dbReference>
<dbReference type="Gene3D" id="2.40.30.10">
    <property type="entry name" value="Translation factors"/>
    <property type="match status" value="2"/>
</dbReference>
<dbReference type="HAMAP" id="MF_00118_A">
    <property type="entry name" value="EF_Tu_A"/>
    <property type="match status" value="1"/>
</dbReference>
<dbReference type="InterPro" id="IPR004161">
    <property type="entry name" value="EFTu-like_2"/>
</dbReference>
<dbReference type="InterPro" id="IPR031157">
    <property type="entry name" value="G_TR_CS"/>
</dbReference>
<dbReference type="InterPro" id="IPR054696">
    <property type="entry name" value="GTP-eEF1A_C"/>
</dbReference>
<dbReference type="InterPro" id="IPR027417">
    <property type="entry name" value="P-loop_NTPase"/>
</dbReference>
<dbReference type="InterPro" id="IPR000795">
    <property type="entry name" value="T_Tr_GTP-bd_dom"/>
</dbReference>
<dbReference type="InterPro" id="IPR050100">
    <property type="entry name" value="TRAFAC_GTPase_members"/>
</dbReference>
<dbReference type="InterPro" id="IPR009000">
    <property type="entry name" value="Transl_B-barrel_sf"/>
</dbReference>
<dbReference type="InterPro" id="IPR009001">
    <property type="entry name" value="Transl_elong_EF1A/Init_IF2_C"/>
</dbReference>
<dbReference type="InterPro" id="IPR004539">
    <property type="entry name" value="Transl_elong_EF1A_euk/arc"/>
</dbReference>
<dbReference type="NCBIfam" id="TIGR00483">
    <property type="entry name" value="EF-1_alpha"/>
    <property type="match status" value="1"/>
</dbReference>
<dbReference type="NCBIfam" id="NF008969">
    <property type="entry name" value="PRK12317.1"/>
    <property type="match status" value="1"/>
</dbReference>
<dbReference type="PANTHER" id="PTHR23115">
    <property type="entry name" value="TRANSLATION FACTOR"/>
    <property type="match status" value="1"/>
</dbReference>
<dbReference type="Pfam" id="PF22594">
    <property type="entry name" value="GTP-eEF1A_C"/>
    <property type="match status" value="1"/>
</dbReference>
<dbReference type="Pfam" id="PF00009">
    <property type="entry name" value="GTP_EFTU"/>
    <property type="match status" value="1"/>
</dbReference>
<dbReference type="Pfam" id="PF03144">
    <property type="entry name" value="GTP_EFTU_D2"/>
    <property type="match status" value="1"/>
</dbReference>
<dbReference type="PRINTS" id="PR00315">
    <property type="entry name" value="ELONGATNFCT"/>
</dbReference>
<dbReference type="SUPFAM" id="SSF50465">
    <property type="entry name" value="EF-Tu/eEF-1alpha/eIF2-gamma C-terminal domain"/>
    <property type="match status" value="1"/>
</dbReference>
<dbReference type="SUPFAM" id="SSF52540">
    <property type="entry name" value="P-loop containing nucleoside triphosphate hydrolases"/>
    <property type="match status" value="1"/>
</dbReference>
<dbReference type="SUPFAM" id="SSF50447">
    <property type="entry name" value="Translation proteins"/>
    <property type="match status" value="1"/>
</dbReference>
<dbReference type="PROSITE" id="PS00301">
    <property type="entry name" value="G_TR_1"/>
    <property type="match status" value="1"/>
</dbReference>
<dbReference type="PROSITE" id="PS51722">
    <property type="entry name" value="G_TR_2"/>
    <property type="match status" value="1"/>
</dbReference>
<keyword id="KW-0963">Cytoplasm</keyword>
<keyword id="KW-0251">Elongation factor</keyword>
<keyword id="KW-0342">GTP-binding</keyword>
<keyword id="KW-1017">Isopeptide bond</keyword>
<keyword id="KW-0488">Methylation</keyword>
<keyword id="KW-0547">Nucleotide-binding</keyword>
<keyword id="KW-0648">Protein biosynthesis</keyword>
<keyword id="KW-1185">Reference proteome</keyword>
<keyword id="KW-0832">Ubl conjugation</keyword>
<name>EF1A1_ARATH</name>
<evidence type="ECO:0000250" key="1"/>
<evidence type="ECO:0000250" key="2">
    <source>
        <dbReference type="UniProtKB" id="Q8GTY0"/>
    </source>
</evidence>
<evidence type="ECO:0000269" key="3">
    <source>
    </source>
</evidence>
<evidence type="ECO:0000305" key="4"/>
<accession>P0DH99</accession>
<accession>P13905</accession>
<protein>
    <recommendedName>
        <fullName>Elongation factor 1-alpha 1</fullName>
        <shortName>EF-1-alpha 1</shortName>
    </recommendedName>
    <alternativeName>
        <fullName>eEF-1A1</fullName>
    </alternativeName>
</protein>
<comment type="function">
    <text>This protein promotes the GTP-dependent binding of aminoacyl-tRNA to the A-site of ribosomes during protein biosynthesis.</text>
</comment>
<comment type="subcellular location">
    <subcellularLocation>
        <location>Cytoplasm</location>
    </subcellularLocation>
</comment>
<comment type="miscellaneous">
    <text>There are four genes for EF-1-alpha in Arabidopsis thaliana. The sequence of genes 1, 2, and 3 are identical.</text>
</comment>
<comment type="similarity">
    <text evidence="4">Belongs to the TRAFAC class translation factor GTPase superfamily. Classic translation factor GTPase family. EF-Tu/EF-1A subfamily.</text>
</comment>